<reference key="1">
    <citation type="submission" date="2005-10" db="EMBL/GenBank/DDBJ databases">
        <title>Complete sequence of chromosome 1 of Burkholderia sp. 383.</title>
        <authorList>
            <consortium name="US DOE Joint Genome Institute"/>
            <person name="Copeland A."/>
            <person name="Lucas S."/>
            <person name="Lapidus A."/>
            <person name="Barry K."/>
            <person name="Detter J.C."/>
            <person name="Glavina T."/>
            <person name="Hammon N."/>
            <person name="Israni S."/>
            <person name="Pitluck S."/>
            <person name="Chain P."/>
            <person name="Malfatti S."/>
            <person name="Shin M."/>
            <person name="Vergez L."/>
            <person name="Schmutz J."/>
            <person name="Larimer F."/>
            <person name="Land M."/>
            <person name="Kyrpides N."/>
            <person name="Lykidis A."/>
            <person name="Richardson P."/>
        </authorList>
    </citation>
    <scope>NUCLEOTIDE SEQUENCE [LARGE SCALE GENOMIC DNA]</scope>
    <source>
        <strain>ATCC 17760 / DSM 23089 / LMG 22485 / NCIMB 9086 / R18194 / 383</strain>
    </source>
</reference>
<proteinExistence type="inferred from homology"/>
<protein>
    <recommendedName>
        <fullName evidence="1">Histidinol dehydrogenase</fullName>
        <shortName evidence="1">HDH</shortName>
        <ecNumber evidence="1">1.1.1.23</ecNumber>
    </recommendedName>
</protein>
<keyword id="KW-0028">Amino-acid biosynthesis</keyword>
<keyword id="KW-0368">Histidine biosynthesis</keyword>
<keyword id="KW-0479">Metal-binding</keyword>
<keyword id="KW-0520">NAD</keyword>
<keyword id="KW-0560">Oxidoreductase</keyword>
<keyword id="KW-0862">Zinc</keyword>
<gene>
    <name evidence="1" type="primary">hisD</name>
    <name type="ordered locus">Bcep18194_A3523</name>
</gene>
<sequence length="438" mass="46414">MSITIRKLDSTSAGFGAELRALLAFEASEDAAIEQSVAQILADVKSRGDAAVLEYTNRFDRLSASSIAALELPQDALQTALDSLAPKARAALEAAAARVRAYHEKQKIECGTHSWQYTESDGTVLGQKVTPLDRVGLYVPGGKAAYPSSVLMNAIPARVAGVGEIVMVVPTPDGVKNDLVLAAALLGGVDRVFTIGGAQAVGALAYGTATVPAVDKICGPGNAYVASAKRRVFGTVGIDMIAGPSEILVLCDGTTDPNWVAMDLFSQAEHDELAQSILLCPDGAFLERVEKAIDELLPSMPRQDVIRASLEGRGALIKVRDMAEACRIANDIAPEHLEISALEPQQWGQQIRHAGAIFLGRYTSESLGDYCAGPNHVLPTSRTARFSSPLGVYDFIKRSSLIEVSAEGAQTLGEIASELAYGEGLQAHAKSAEFRMKH</sequence>
<organism>
    <name type="scientific">Burkholderia lata (strain ATCC 17760 / DSM 23089 / LMG 22485 / NCIMB 9086 / R18194 / 383)</name>
    <dbReference type="NCBI Taxonomy" id="482957"/>
    <lineage>
        <taxon>Bacteria</taxon>
        <taxon>Pseudomonadati</taxon>
        <taxon>Pseudomonadota</taxon>
        <taxon>Betaproteobacteria</taxon>
        <taxon>Burkholderiales</taxon>
        <taxon>Burkholderiaceae</taxon>
        <taxon>Burkholderia</taxon>
        <taxon>Burkholderia cepacia complex</taxon>
    </lineage>
</organism>
<accession>Q39K91</accession>
<name>HISX_BURL3</name>
<comment type="function">
    <text evidence="1">Catalyzes the sequential NAD-dependent oxidations of L-histidinol to L-histidinaldehyde and then to L-histidine.</text>
</comment>
<comment type="catalytic activity">
    <reaction evidence="1">
        <text>L-histidinol + 2 NAD(+) + H2O = L-histidine + 2 NADH + 3 H(+)</text>
        <dbReference type="Rhea" id="RHEA:20641"/>
        <dbReference type="ChEBI" id="CHEBI:15377"/>
        <dbReference type="ChEBI" id="CHEBI:15378"/>
        <dbReference type="ChEBI" id="CHEBI:57540"/>
        <dbReference type="ChEBI" id="CHEBI:57595"/>
        <dbReference type="ChEBI" id="CHEBI:57699"/>
        <dbReference type="ChEBI" id="CHEBI:57945"/>
        <dbReference type="EC" id="1.1.1.23"/>
    </reaction>
</comment>
<comment type="cofactor">
    <cofactor evidence="1">
        <name>Zn(2+)</name>
        <dbReference type="ChEBI" id="CHEBI:29105"/>
    </cofactor>
    <text evidence="1">Binds 1 zinc ion per subunit.</text>
</comment>
<comment type="pathway">
    <text evidence="1">Amino-acid biosynthesis; L-histidine biosynthesis; L-histidine from 5-phospho-alpha-D-ribose 1-diphosphate: step 9/9.</text>
</comment>
<comment type="similarity">
    <text evidence="1">Belongs to the histidinol dehydrogenase family.</text>
</comment>
<feature type="chain" id="PRO_0000229853" description="Histidinol dehydrogenase">
    <location>
        <begin position="1"/>
        <end position="438"/>
    </location>
</feature>
<feature type="active site" description="Proton acceptor" evidence="1">
    <location>
        <position position="335"/>
    </location>
</feature>
<feature type="active site" description="Proton acceptor" evidence="1">
    <location>
        <position position="336"/>
    </location>
</feature>
<feature type="binding site" evidence="1">
    <location>
        <position position="138"/>
    </location>
    <ligand>
        <name>NAD(+)</name>
        <dbReference type="ChEBI" id="CHEBI:57540"/>
    </ligand>
</feature>
<feature type="binding site" evidence="1">
    <location>
        <position position="199"/>
    </location>
    <ligand>
        <name>NAD(+)</name>
        <dbReference type="ChEBI" id="CHEBI:57540"/>
    </ligand>
</feature>
<feature type="binding site" evidence="1">
    <location>
        <position position="222"/>
    </location>
    <ligand>
        <name>NAD(+)</name>
        <dbReference type="ChEBI" id="CHEBI:57540"/>
    </ligand>
</feature>
<feature type="binding site" evidence="1">
    <location>
        <position position="245"/>
    </location>
    <ligand>
        <name>substrate</name>
    </ligand>
</feature>
<feature type="binding site" evidence="1">
    <location>
        <position position="267"/>
    </location>
    <ligand>
        <name>substrate</name>
    </ligand>
</feature>
<feature type="binding site" evidence="1">
    <location>
        <position position="267"/>
    </location>
    <ligand>
        <name>Zn(2+)</name>
        <dbReference type="ChEBI" id="CHEBI:29105"/>
    </ligand>
</feature>
<feature type="binding site" evidence="1">
    <location>
        <position position="270"/>
    </location>
    <ligand>
        <name>substrate</name>
    </ligand>
</feature>
<feature type="binding site" evidence="1">
    <location>
        <position position="270"/>
    </location>
    <ligand>
        <name>Zn(2+)</name>
        <dbReference type="ChEBI" id="CHEBI:29105"/>
    </ligand>
</feature>
<feature type="binding site" evidence="1">
    <location>
        <position position="336"/>
    </location>
    <ligand>
        <name>substrate</name>
    </ligand>
</feature>
<feature type="binding site" evidence="1">
    <location>
        <position position="369"/>
    </location>
    <ligand>
        <name>substrate</name>
    </ligand>
</feature>
<feature type="binding site" evidence="1">
    <location>
        <position position="369"/>
    </location>
    <ligand>
        <name>Zn(2+)</name>
        <dbReference type="ChEBI" id="CHEBI:29105"/>
    </ligand>
</feature>
<feature type="binding site" evidence="1">
    <location>
        <position position="423"/>
    </location>
    <ligand>
        <name>substrate</name>
    </ligand>
</feature>
<feature type="binding site" evidence="1">
    <location>
        <position position="428"/>
    </location>
    <ligand>
        <name>substrate</name>
    </ligand>
</feature>
<feature type="binding site" evidence="1">
    <location>
        <position position="428"/>
    </location>
    <ligand>
        <name>Zn(2+)</name>
        <dbReference type="ChEBI" id="CHEBI:29105"/>
    </ligand>
</feature>
<evidence type="ECO:0000255" key="1">
    <source>
        <dbReference type="HAMAP-Rule" id="MF_01024"/>
    </source>
</evidence>
<dbReference type="EC" id="1.1.1.23" evidence="1"/>
<dbReference type="EMBL" id="CP000151">
    <property type="protein sequence ID" value="ABB07125.1"/>
    <property type="molecule type" value="Genomic_DNA"/>
</dbReference>
<dbReference type="RefSeq" id="WP_011350726.1">
    <property type="nucleotide sequence ID" value="NC_007510.1"/>
</dbReference>
<dbReference type="SMR" id="Q39K91"/>
<dbReference type="GeneID" id="45093438"/>
<dbReference type="KEGG" id="bur:Bcep18194_A3523"/>
<dbReference type="PATRIC" id="fig|482957.22.peg.368"/>
<dbReference type="HOGENOM" id="CLU_006732_3_3_4"/>
<dbReference type="UniPathway" id="UPA00031">
    <property type="reaction ID" value="UER00014"/>
</dbReference>
<dbReference type="Proteomes" id="UP000002705">
    <property type="component" value="Chromosome 1"/>
</dbReference>
<dbReference type="GO" id="GO:0005829">
    <property type="term" value="C:cytosol"/>
    <property type="evidence" value="ECO:0007669"/>
    <property type="project" value="TreeGrafter"/>
</dbReference>
<dbReference type="GO" id="GO:0004399">
    <property type="term" value="F:histidinol dehydrogenase activity"/>
    <property type="evidence" value="ECO:0007669"/>
    <property type="project" value="UniProtKB-UniRule"/>
</dbReference>
<dbReference type="GO" id="GO:0051287">
    <property type="term" value="F:NAD binding"/>
    <property type="evidence" value="ECO:0007669"/>
    <property type="project" value="InterPro"/>
</dbReference>
<dbReference type="GO" id="GO:0008270">
    <property type="term" value="F:zinc ion binding"/>
    <property type="evidence" value="ECO:0007669"/>
    <property type="project" value="UniProtKB-UniRule"/>
</dbReference>
<dbReference type="GO" id="GO:0000105">
    <property type="term" value="P:L-histidine biosynthetic process"/>
    <property type="evidence" value="ECO:0007669"/>
    <property type="project" value="UniProtKB-UniRule"/>
</dbReference>
<dbReference type="CDD" id="cd06572">
    <property type="entry name" value="Histidinol_dh"/>
    <property type="match status" value="1"/>
</dbReference>
<dbReference type="FunFam" id="3.40.50.1980:FF:000001">
    <property type="entry name" value="Histidinol dehydrogenase"/>
    <property type="match status" value="1"/>
</dbReference>
<dbReference type="FunFam" id="3.40.50.1980:FF:000026">
    <property type="entry name" value="Histidinol dehydrogenase"/>
    <property type="match status" value="1"/>
</dbReference>
<dbReference type="Gene3D" id="1.20.5.1300">
    <property type="match status" value="1"/>
</dbReference>
<dbReference type="Gene3D" id="3.40.50.1980">
    <property type="entry name" value="Nitrogenase molybdenum iron protein domain"/>
    <property type="match status" value="2"/>
</dbReference>
<dbReference type="HAMAP" id="MF_01024">
    <property type="entry name" value="HisD"/>
    <property type="match status" value="1"/>
</dbReference>
<dbReference type="InterPro" id="IPR016161">
    <property type="entry name" value="Ald_DH/histidinol_DH"/>
</dbReference>
<dbReference type="InterPro" id="IPR001692">
    <property type="entry name" value="Histidinol_DH_CS"/>
</dbReference>
<dbReference type="InterPro" id="IPR022695">
    <property type="entry name" value="Histidinol_DH_monofunct"/>
</dbReference>
<dbReference type="InterPro" id="IPR012131">
    <property type="entry name" value="Hstdl_DH"/>
</dbReference>
<dbReference type="NCBIfam" id="TIGR00069">
    <property type="entry name" value="hisD"/>
    <property type="match status" value="1"/>
</dbReference>
<dbReference type="PANTHER" id="PTHR21256:SF2">
    <property type="entry name" value="HISTIDINE BIOSYNTHESIS TRIFUNCTIONAL PROTEIN"/>
    <property type="match status" value="1"/>
</dbReference>
<dbReference type="PANTHER" id="PTHR21256">
    <property type="entry name" value="HISTIDINOL DEHYDROGENASE HDH"/>
    <property type="match status" value="1"/>
</dbReference>
<dbReference type="Pfam" id="PF00815">
    <property type="entry name" value="Histidinol_dh"/>
    <property type="match status" value="1"/>
</dbReference>
<dbReference type="PIRSF" id="PIRSF000099">
    <property type="entry name" value="Histidinol_dh"/>
    <property type="match status" value="1"/>
</dbReference>
<dbReference type="PRINTS" id="PR00083">
    <property type="entry name" value="HOLDHDRGNASE"/>
</dbReference>
<dbReference type="SUPFAM" id="SSF53720">
    <property type="entry name" value="ALDH-like"/>
    <property type="match status" value="1"/>
</dbReference>
<dbReference type="PROSITE" id="PS00611">
    <property type="entry name" value="HISOL_DEHYDROGENASE"/>
    <property type="match status" value="1"/>
</dbReference>